<gene>
    <name evidence="1" type="primary">secA</name>
    <name type="ordered locus">XOO3818</name>
</gene>
<evidence type="ECO:0000255" key="1">
    <source>
        <dbReference type="HAMAP-Rule" id="MF_01382"/>
    </source>
</evidence>
<evidence type="ECO:0000256" key="2">
    <source>
        <dbReference type="SAM" id="MobiDB-lite"/>
    </source>
</evidence>
<evidence type="ECO:0000305" key="3"/>
<feature type="chain" id="PRO_0000321046" description="Protein translocase subunit SecA">
    <location>
        <begin position="1"/>
        <end position="912"/>
    </location>
</feature>
<feature type="region of interest" description="Disordered" evidence="2">
    <location>
        <begin position="865"/>
        <end position="912"/>
    </location>
</feature>
<feature type="compositionally biased region" description="Basic residues" evidence="2">
    <location>
        <begin position="902"/>
        <end position="912"/>
    </location>
</feature>
<feature type="binding site" evidence="1">
    <location>
        <position position="87"/>
    </location>
    <ligand>
        <name>ATP</name>
        <dbReference type="ChEBI" id="CHEBI:30616"/>
    </ligand>
</feature>
<feature type="binding site" evidence="1">
    <location>
        <begin position="105"/>
        <end position="109"/>
    </location>
    <ligand>
        <name>ATP</name>
        <dbReference type="ChEBI" id="CHEBI:30616"/>
    </ligand>
</feature>
<feature type="binding site" evidence="1">
    <location>
        <position position="508"/>
    </location>
    <ligand>
        <name>ATP</name>
        <dbReference type="ChEBI" id="CHEBI:30616"/>
    </ligand>
</feature>
<feature type="binding site" evidence="1">
    <location>
        <position position="896"/>
    </location>
    <ligand>
        <name>Zn(2+)</name>
        <dbReference type="ChEBI" id="CHEBI:29105"/>
    </ligand>
</feature>
<feature type="binding site" evidence="1">
    <location>
        <position position="898"/>
    </location>
    <ligand>
        <name>Zn(2+)</name>
        <dbReference type="ChEBI" id="CHEBI:29105"/>
    </ligand>
</feature>
<feature type="binding site" evidence="1">
    <location>
        <position position="907"/>
    </location>
    <ligand>
        <name>Zn(2+)</name>
        <dbReference type="ChEBI" id="CHEBI:29105"/>
    </ligand>
</feature>
<feature type="binding site" evidence="1">
    <location>
        <position position="908"/>
    </location>
    <ligand>
        <name>Zn(2+)</name>
        <dbReference type="ChEBI" id="CHEBI:29105"/>
    </ligand>
</feature>
<protein>
    <recommendedName>
        <fullName evidence="1">Protein translocase subunit SecA</fullName>
        <ecNumber evidence="1">7.4.2.8</ecNumber>
    </recommendedName>
</protein>
<dbReference type="EC" id="7.4.2.8" evidence="1"/>
<dbReference type="EMBL" id="AE013598">
    <property type="protein sequence ID" value="AAW77072.1"/>
    <property type="status" value="ALT_INIT"/>
    <property type="molecule type" value="Genomic_DNA"/>
</dbReference>
<dbReference type="SMR" id="Q5GW49"/>
<dbReference type="STRING" id="291331.XOO3818"/>
<dbReference type="KEGG" id="xoo:XOO3818"/>
<dbReference type="HOGENOM" id="CLU_005314_3_0_6"/>
<dbReference type="Proteomes" id="UP000006735">
    <property type="component" value="Chromosome"/>
</dbReference>
<dbReference type="GO" id="GO:0031522">
    <property type="term" value="C:cell envelope Sec protein transport complex"/>
    <property type="evidence" value="ECO:0007669"/>
    <property type="project" value="TreeGrafter"/>
</dbReference>
<dbReference type="GO" id="GO:0005829">
    <property type="term" value="C:cytosol"/>
    <property type="evidence" value="ECO:0007669"/>
    <property type="project" value="TreeGrafter"/>
</dbReference>
<dbReference type="GO" id="GO:0005886">
    <property type="term" value="C:plasma membrane"/>
    <property type="evidence" value="ECO:0007669"/>
    <property type="project" value="UniProtKB-SubCell"/>
</dbReference>
<dbReference type="GO" id="GO:0005524">
    <property type="term" value="F:ATP binding"/>
    <property type="evidence" value="ECO:0007669"/>
    <property type="project" value="UniProtKB-UniRule"/>
</dbReference>
<dbReference type="GO" id="GO:0046872">
    <property type="term" value="F:metal ion binding"/>
    <property type="evidence" value="ECO:0007669"/>
    <property type="project" value="UniProtKB-KW"/>
</dbReference>
<dbReference type="GO" id="GO:0008564">
    <property type="term" value="F:protein-exporting ATPase activity"/>
    <property type="evidence" value="ECO:0007669"/>
    <property type="project" value="UniProtKB-EC"/>
</dbReference>
<dbReference type="GO" id="GO:0065002">
    <property type="term" value="P:intracellular protein transmembrane transport"/>
    <property type="evidence" value="ECO:0007669"/>
    <property type="project" value="UniProtKB-UniRule"/>
</dbReference>
<dbReference type="GO" id="GO:0017038">
    <property type="term" value="P:protein import"/>
    <property type="evidence" value="ECO:0007669"/>
    <property type="project" value="InterPro"/>
</dbReference>
<dbReference type="GO" id="GO:0006605">
    <property type="term" value="P:protein targeting"/>
    <property type="evidence" value="ECO:0007669"/>
    <property type="project" value="UniProtKB-UniRule"/>
</dbReference>
<dbReference type="GO" id="GO:0043952">
    <property type="term" value="P:protein transport by the Sec complex"/>
    <property type="evidence" value="ECO:0007669"/>
    <property type="project" value="TreeGrafter"/>
</dbReference>
<dbReference type="CDD" id="cd17928">
    <property type="entry name" value="DEXDc_SecA"/>
    <property type="match status" value="1"/>
</dbReference>
<dbReference type="CDD" id="cd18803">
    <property type="entry name" value="SF2_C_secA"/>
    <property type="match status" value="1"/>
</dbReference>
<dbReference type="FunFam" id="3.40.50.300:FF:000113">
    <property type="entry name" value="Preprotein translocase subunit SecA"/>
    <property type="match status" value="1"/>
</dbReference>
<dbReference type="FunFam" id="3.90.1440.10:FF:000001">
    <property type="entry name" value="Preprotein translocase subunit SecA"/>
    <property type="match status" value="1"/>
</dbReference>
<dbReference type="FunFam" id="1.10.3060.10:FF:000003">
    <property type="entry name" value="Protein translocase subunit SecA"/>
    <property type="match status" value="1"/>
</dbReference>
<dbReference type="FunFam" id="3.40.50.300:FF:000334">
    <property type="entry name" value="Protein translocase subunit SecA"/>
    <property type="match status" value="1"/>
</dbReference>
<dbReference type="Gene3D" id="1.10.3060.10">
    <property type="entry name" value="Helical scaffold and wing domains of SecA"/>
    <property type="match status" value="1"/>
</dbReference>
<dbReference type="Gene3D" id="3.40.50.300">
    <property type="entry name" value="P-loop containing nucleotide triphosphate hydrolases"/>
    <property type="match status" value="2"/>
</dbReference>
<dbReference type="Gene3D" id="3.90.1440.10">
    <property type="entry name" value="SecA, preprotein cross-linking domain"/>
    <property type="match status" value="1"/>
</dbReference>
<dbReference type="HAMAP" id="MF_01382">
    <property type="entry name" value="SecA"/>
    <property type="match status" value="1"/>
</dbReference>
<dbReference type="InterPro" id="IPR014001">
    <property type="entry name" value="Helicase_ATP-bd"/>
</dbReference>
<dbReference type="InterPro" id="IPR001650">
    <property type="entry name" value="Helicase_C-like"/>
</dbReference>
<dbReference type="InterPro" id="IPR027417">
    <property type="entry name" value="P-loop_NTPase"/>
</dbReference>
<dbReference type="InterPro" id="IPR004027">
    <property type="entry name" value="SEC_C_motif"/>
</dbReference>
<dbReference type="InterPro" id="IPR000185">
    <property type="entry name" value="SecA"/>
</dbReference>
<dbReference type="InterPro" id="IPR020937">
    <property type="entry name" value="SecA_CS"/>
</dbReference>
<dbReference type="InterPro" id="IPR011115">
    <property type="entry name" value="SecA_DEAD"/>
</dbReference>
<dbReference type="InterPro" id="IPR014018">
    <property type="entry name" value="SecA_motor_DEAD"/>
</dbReference>
<dbReference type="InterPro" id="IPR011130">
    <property type="entry name" value="SecA_preprotein_X-link_dom"/>
</dbReference>
<dbReference type="InterPro" id="IPR044722">
    <property type="entry name" value="SecA_SF2_C"/>
</dbReference>
<dbReference type="InterPro" id="IPR011116">
    <property type="entry name" value="SecA_Wing/Scaffold"/>
</dbReference>
<dbReference type="InterPro" id="IPR036266">
    <property type="entry name" value="SecA_Wing/Scaffold_sf"/>
</dbReference>
<dbReference type="InterPro" id="IPR036670">
    <property type="entry name" value="SecA_X-link_sf"/>
</dbReference>
<dbReference type="NCBIfam" id="NF009538">
    <property type="entry name" value="PRK12904.1"/>
    <property type="match status" value="1"/>
</dbReference>
<dbReference type="NCBIfam" id="TIGR00963">
    <property type="entry name" value="secA"/>
    <property type="match status" value="1"/>
</dbReference>
<dbReference type="PANTHER" id="PTHR30612:SF0">
    <property type="entry name" value="CHLOROPLAST PROTEIN-TRANSPORTING ATPASE"/>
    <property type="match status" value="1"/>
</dbReference>
<dbReference type="PANTHER" id="PTHR30612">
    <property type="entry name" value="SECA INNER MEMBRANE COMPONENT OF SEC PROTEIN SECRETION SYSTEM"/>
    <property type="match status" value="1"/>
</dbReference>
<dbReference type="Pfam" id="PF21090">
    <property type="entry name" value="P-loop_SecA"/>
    <property type="match status" value="1"/>
</dbReference>
<dbReference type="Pfam" id="PF02810">
    <property type="entry name" value="SEC-C"/>
    <property type="match status" value="1"/>
</dbReference>
<dbReference type="Pfam" id="PF07517">
    <property type="entry name" value="SecA_DEAD"/>
    <property type="match status" value="1"/>
</dbReference>
<dbReference type="Pfam" id="PF01043">
    <property type="entry name" value="SecA_PP_bind"/>
    <property type="match status" value="1"/>
</dbReference>
<dbReference type="Pfam" id="PF07516">
    <property type="entry name" value="SecA_SW"/>
    <property type="match status" value="1"/>
</dbReference>
<dbReference type="PRINTS" id="PR00906">
    <property type="entry name" value="SECA"/>
</dbReference>
<dbReference type="SMART" id="SM00957">
    <property type="entry name" value="SecA_DEAD"/>
    <property type="match status" value="1"/>
</dbReference>
<dbReference type="SMART" id="SM00958">
    <property type="entry name" value="SecA_PP_bind"/>
    <property type="match status" value="1"/>
</dbReference>
<dbReference type="SUPFAM" id="SSF81886">
    <property type="entry name" value="Helical scaffold and wing domains of SecA"/>
    <property type="match status" value="1"/>
</dbReference>
<dbReference type="SUPFAM" id="SSF52540">
    <property type="entry name" value="P-loop containing nucleoside triphosphate hydrolases"/>
    <property type="match status" value="2"/>
</dbReference>
<dbReference type="SUPFAM" id="SSF81767">
    <property type="entry name" value="Pre-protein crosslinking domain of SecA"/>
    <property type="match status" value="1"/>
</dbReference>
<dbReference type="PROSITE" id="PS01312">
    <property type="entry name" value="SECA"/>
    <property type="match status" value="1"/>
</dbReference>
<dbReference type="PROSITE" id="PS51196">
    <property type="entry name" value="SECA_MOTOR_DEAD"/>
    <property type="match status" value="1"/>
</dbReference>
<comment type="function">
    <text evidence="1">Part of the Sec protein translocase complex. Interacts with the SecYEG preprotein conducting channel. Has a central role in coupling the hydrolysis of ATP to the transfer of proteins into and across the cell membrane, serving both as a receptor for the preprotein-SecB complex and as an ATP-driven molecular motor driving the stepwise translocation of polypeptide chains across the membrane.</text>
</comment>
<comment type="catalytic activity">
    <reaction evidence="1">
        <text>ATP + H2O + cellular proteinSide 1 = ADP + phosphate + cellular proteinSide 2.</text>
        <dbReference type="EC" id="7.4.2.8"/>
    </reaction>
</comment>
<comment type="cofactor">
    <cofactor evidence="1">
        <name>Zn(2+)</name>
        <dbReference type="ChEBI" id="CHEBI:29105"/>
    </cofactor>
    <text evidence="1">May bind 1 zinc ion per subunit.</text>
</comment>
<comment type="subunit">
    <text evidence="1">Monomer and homodimer. Part of the essential Sec protein translocation apparatus which comprises SecA, SecYEG and auxiliary proteins SecDF-YajC and YidC.</text>
</comment>
<comment type="subcellular location">
    <subcellularLocation>
        <location evidence="1">Cell inner membrane</location>
        <topology evidence="1">Peripheral membrane protein</topology>
        <orientation evidence="1">Cytoplasmic side</orientation>
    </subcellularLocation>
    <subcellularLocation>
        <location evidence="1">Cytoplasm</location>
    </subcellularLocation>
    <text evidence="1">Distribution is 50-50.</text>
</comment>
<comment type="similarity">
    <text evidence="1">Belongs to the SecA family.</text>
</comment>
<comment type="sequence caution" evidence="3">
    <conflict type="erroneous initiation">
        <sequence resource="EMBL-CDS" id="AAW77072"/>
    </conflict>
    <text>Extended N-terminus.</text>
</comment>
<name>SECA_XANOR</name>
<sequence>MINSLLTRVFGSRNERQLRQLTRLVTQINALEPTIEKLSDAELQAKTPEFKQRLAAGESLDKILPEAFAVCREASRRVLGMRHYDVQLIGGMVLHLGKIAEMRTGEGKTLVATLPVYLNALQGEGVHVVTVNDYLARRDAAQMGKLYNWLGLSVGVVYPGMPHSDKREAYGSDITYGTNNEFGFDYLRDNMALSRADRYQRTLHYAIVDEVDSILIDEARTPLIISGPADESPELYIRVNRIVPQLTKQESEEGEGDFWVDEKGKQVHLSEAGMGHAEELLLQAGILENAEDGLYAAQNLSVVHHLNAALRAHAIYQRDVDYIVRDGEVVIVDEFTGRTLSGRRWSDGLHQAVEAKEGVPVQRENQTLASITFQNLFRMYKKLSGMTGTADTEAYEFQSIYGLEVVVIPTNRPTVRKDHPDQVFLNRKGKFNAVLADIEDCAKRGQPVLVGTTSIETSEMLSEHLRKAGVKHEVLNAKQHEREATIVANAGQPGAVTIATNMAGRGTDIVLGGSLESEYHALGEDATEDARFKIKTDWQRRHDAVKAAGGLHIIGTERHESRRIDNQLRGRAGRQGDPGSSRFYLSLEDNLMRIFASDWVQKAMRMMGMKEDDVIEDRLVSRQIEKAQRKVEAHNFDIRKNLLDFDDVNNDQRKVIYAQRDELLDAESVKDNVDGIRGDVIYDLVARFVPPNSVDEQWDVKGLEATLESELGVTLSLTDMVRTQEEIDAEQIAAKVQAAVDAHFAEKEAAVGNDTMRALEKHVMLTVLDQGWKEHLAKMDYLRQGIYLRGYAQKQPKQEYKKEAFELFSEMLENVKREVIHLLARVRIRSEEEVAELEEQERLHAQARLMASQFQHQDVGGYGTDEEAAQVQSGNAPVPVSQVTRDEPKVGRNDPCPCGSGKKYKHCHGQLS</sequence>
<reference key="1">
    <citation type="journal article" date="2005" name="Nucleic Acids Res.">
        <title>The genome sequence of Xanthomonas oryzae pathovar oryzae KACC10331, the bacterial blight pathogen of rice.</title>
        <authorList>
            <person name="Lee B.-M."/>
            <person name="Park Y.-J."/>
            <person name="Park D.-S."/>
            <person name="Kang H.-W."/>
            <person name="Kim J.-G."/>
            <person name="Song E.-S."/>
            <person name="Park I.-C."/>
            <person name="Yoon U.-H."/>
            <person name="Hahn J.-H."/>
            <person name="Koo B.-S."/>
            <person name="Lee G.-B."/>
            <person name="Kim H."/>
            <person name="Park H.-S."/>
            <person name="Yoon K.-O."/>
            <person name="Kim J.-H."/>
            <person name="Jung C.-H."/>
            <person name="Koh N.-H."/>
            <person name="Seo J.-S."/>
            <person name="Go S.-J."/>
        </authorList>
    </citation>
    <scope>NUCLEOTIDE SEQUENCE [LARGE SCALE GENOMIC DNA]</scope>
    <source>
        <strain>KACC10331 / KXO85</strain>
    </source>
</reference>
<organism>
    <name type="scientific">Xanthomonas oryzae pv. oryzae (strain KACC10331 / KXO85)</name>
    <dbReference type="NCBI Taxonomy" id="291331"/>
    <lineage>
        <taxon>Bacteria</taxon>
        <taxon>Pseudomonadati</taxon>
        <taxon>Pseudomonadota</taxon>
        <taxon>Gammaproteobacteria</taxon>
        <taxon>Lysobacterales</taxon>
        <taxon>Lysobacteraceae</taxon>
        <taxon>Xanthomonas</taxon>
    </lineage>
</organism>
<accession>Q5GW49</accession>
<proteinExistence type="inferred from homology"/>
<keyword id="KW-0067">ATP-binding</keyword>
<keyword id="KW-0997">Cell inner membrane</keyword>
<keyword id="KW-1003">Cell membrane</keyword>
<keyword id="KW-0963">Cytoplasm</keyword>
<keyword id="KW-0472">Membrane</keyword>
<keyword id="KW-0479">Metal-binding</keyword>
<keyword id="KW-0547">Nucleotide-binding</keyword>
<keyword id="KW-0653">Protein transport</keyword>
<keyword id="KW-1185">Reference proteome</keyword>
<keyword id="KW-1278">Translocase</keyword>
<keyword id="KW-0811">Translocation</keyword>
<keyword id="KW-0813">Transport</keyword>
<keyword id="KW-0862">Zinc</keyword>